<protein>
    <recommendedName>
        <fullName evidence="1">Aspartate--tRNA ligase</fullName>
        <ecNumber evidence="1">6.1.1.12</ecNumber>
    </recommendedName>
    <alternativeName>
        <fullName evidence="1">Aspartyl-tRNA synthetase</fullName>
        <shortName evidence="1">AspRS</shortName>
    </alternativeName>
</protein>
<accession>B0USU0</accession>
<proteinExistence type="inferred from homology"/>
<evidence type="ECO:0000255" key="1">
    <source>
        <dbReference type="HAMAP-Rule" id="MF_00044"/>
    </source>
</evidence>
<sequence>MMRSHYCGALNRSHIGQQVILSGWVHKRRDLGGLIFIDMRDREGIVQVCFDPKYQEALTEASALRNEFCIKIEGEVIARPDNQINKNMATGEVEVVAKALSVYNVSDVLPLDFNQNNTEEQRLKYRYLDLRRPEMAQHLKTRAKITAFVRRYMDENGFLDIETPMLTKATPEGARDYLVPSRVHKGKFYALPQSPQLFKQLLMMSGFDRYYQIVKCFRDEDLRADRQPEFTQIDVETSFMTAPEVREIMEKMVHGLWLNTIGVDLGKFPTMTWQEAMERFGSDKPDLRNPLEIVDVADIVKDIDFNVFSDPANSSNGRVAVIRVPNGINITRKQIDEYTQFVGIYGAKGLAWVKINDINAGLEGVQSPIAKFLTTEKIKAIFDRTSAQSDDILFFGADKWQTATDAMGALRLKLGRDLGLTHLDEWKPLWVIDFPMFERDEEGNLAAMHHPFTSPKDFTPEQLEANPTSAVANAYDMVINGYEVGGGSVRIFDPKMQQTVFHILGIDEDQQREKFGFLLDALKFGTPPHAGLAFGLDRLTMLLTGTDNIRDVIAFPKTTAAACLMTDAPSLANEKALEELAIKVTRSE</sequence>
<name>SYD_HISS2</name>
<feature type="chain" id="PRO_1000074706" description="Aspartate--tRNA ligase">
    <location>
        <begin position="1"/>
        <end position="588"/>
    </location>
</feature>
<feature type="region of interest" description="Aspartate" evidence="1">
    <location>
        <begin position="196"/>
        <end position="199"/>
    </location>
</feature>
<feature type="binding site" evidence="1">
    <location>
        <position position="172"/>
    </location>
    <ligand>
        <name>L-aspartate</name>
        <dbReference type="ChEBI" id="CHEBI:29991"/>
    </ligand>
</feature>
<feature type="binding site" evidence="1">
    <location>
        <begin position="218"/>
        <end position="220"/>
    </location>
    <ligand>
        <name>ATP</name>
        <dbReference type="ChEBI" id="CHEBI:30616"/>
    </ligand>
</feature>
<feature type="binding site" evidence="1">
    <location>
        <position position="218"/>
    </location>
    <ligand>
        <name>L-aspartate</name>
        <dbReference type="ChEBI" id="CHEBI:29991"/>
    </ligand>
</feature>
<feature type="binding site" evidence="1">
    <location>
        <position position="227"/>
    </location>
    <ligand>
        <name>ATP</name>
        <dbReference type="ChEBI" id="CHEBI:30616"/>
    </ligand>
</feature>
<feature type="binding site" evidence="1">
    <location>
        <position position="449"/>
    </location>
    <ligand>
        <name>L-aspartate</name>
        <dbReference type="ChEBI" id="CHEBI:29991"/>
    </ligand>
</feature>
<feature type="binding site" evidence="1">
    <location>
        <position position="483"/>
    </location>
    <ligand>
        <name>ATP</name>
        <dbReference type="ChEBI" id="CHEBI:30616"/>
    </ligand>
</feature>
<feature type="binding site" evidence="1">
    <location>
        <position position="490"/>
    </location>
    <ligand>
        <name>L-aspartate</name>
        <dbReference type="ChEBI" id="CHEBI:29991"/>
    </ligand>
</feature>
<feature type="binding site" evidence="1">
    <location>
        <begin position="535"/>
        <end position="538"/>
    </location>
    <ligand>
        <name>ATP</name>
        <dbReference type="ChEBI" id="CHEBI:30616"/>
    </ligand>
</feature>
<keyword id="KW-0030">Aminoacyl-tRNA synthetase</keyword>
<keyword id="KW-0067">ATP-binding</keyword>
<keyword id="KW-0963">Cytoplasm</keyword>
<keyword id="KW-0436">Ligase</keyword>
<keyword id="KW-0547">Nucleotide-binding</keyword>
<keyword id="KW-0648">Protein biosynthesis</keyword>
<organism>
    <name type="scientific">Histophilus somni (strain 2336)</name>
    <name type="common">Haemophilus somnus</name>
    <dbReference type="NCBI Taxonomy" id="228400"/>
    <lineage>
        <taxon>Bacteria</taxon>
        <taxon>Pseudomonadati</taxon>
        <taxon>Pseudomonadota</taxon>
        <taxon>Gammaproteobacteria</taxon>
        <taxon>Pasteurellales</taxon>
        <taxon>Pasteurellaceae</taxon>
        <taxon>Histophilus</taxon>
    </lineage>
</organism>
<dbReference type="EC" id="6.1.1.12" evidence="1"/>
<dbReference type="EMBL" id="CP000947">
    <property type="protein sequence ID" value="ACA32531.1"/>
    <property type="molecule type" value="Genomic_DNA"/>
</dbReference>
<dbReference type="RefSeq" id="WP_012341665.1">
    <property type="nucleotide sequence ID" value="NC_010519.1"/>
</dbReference>
<dbReference type="SMR" id="B0USU0"/>
<dbReference type="STRING" id="228400.HSM_0857"/>
<dbReference type="GeneID" id="31487151"/>
<dbReference type="KEGG" id="hsm:HSM_0857"/>
<dbReference type="HOGENOM" id="CLU_014330_3_2_6"/>
<dbReference type="GO" id="GO:0005737">
    <property type="term" value="C:cytoplasm"/>
    <property type="evidence" value="ECO:0007669"/>
    <property type="project" value="UniProtKB-SubCell"/>
</dbReference>
<dbReference type="GO" id="GO:0004815">
    <property type="term" value="F:aspartate-tRNA ligase activity"/>
    <property type="evidence" value="ECO:0007669"/>
    <property type="project" value="UniProtKB-UniRule"/>
</dbReference>
<dbReference type="GO" id="GO:0005524">
    <property type="term" value="F:ATP binding"/>
    <property type="evidence" value="ECO:0007669"/>
    <property type="project" value="UniProtKB-UniRule"/>
</dbReference>
<dbReference type="GO" id="GO:0003676">
    <property type="term" value="F:nucleic acid binding"/>
    <property type="evidence" value="ECO:0007669"/>
    <property type="project" value="InterPro"/>
</dbReference>
<dbReference type="GO" id="GO:0006422">
    <property type="term" value="P:aspartyl-tRNA aminoacylation"/>
    <property type="evidence" value="ECO:0007669"/>
    <property type="project" value="UniProtKB-UniRule"/>
</dbReference>
<dbReference type="CDD" id="cd00777">
    <property type="entry name" value="AspRS_core"/>
    <property type="match status" value="1"/>
</dbReference>
<dbReference type="CDD" id="cd04317">
    <property type="entry name" value="EcAspRS_like_N"/>
    <property type="match status" value="1"/>
</dbReference>
<dbReference type="FunFam" id="2.40.50.140:FF:000080">
    <property type="entry name" value="Aspartate--tRNA ligase"/>
    <property type="match status" value="1"/>
</dbReference>
<dbReference type="Gene3D" id="3.30.930.10">
    <property type="entry name" value="Bira Bifunctional Protein, Domain 2"/>
    <property type="match status" value="1"/>
</dbReference>
<dbReference type="Gene3D" id="3.30.1360.30">
    <property type="entry name" value="GAD-like domain"/>
    <property type="match status" value="1"/>
</dbReference>
<dbReference type="Gene3D" id="2.40.50.140">
    <property type="entry name" value="Nucleic acid-binding proteins"/>
    <property type="match status" value="1"/>
</dbReference>
<dbReference type="HAMAP" id="MF_00044">
    <property type="entry name" value="Asp_tRNA_synth_type1"/>
    <property type="match status" value="1"/>
</dbReference>
<dbReference type="InterPro" id="IPR004364">
    <property type="entry name" value="Aa-tRNA-synt_II"/>
</dbReference>
<dbReference type="InterPro" id="IPR006195">
    <property type="entry name" value="aa-tRNA-synth_II"/>
</dbReference>
<dbReference type="InterPro" id="IPR045864">
    <property type="entry name" value="aa-tRNA-synth_II/BPL/LPL"/>
</dbReference>
<dbReference type="InterPro" id="IPR004524">
    <property type="entry name" value="Asp-tRNA-ligase_1"/>
</dbReference>
<dbReference type="InterPro" id="IPR047089">
    <property type="entry name" value="Asp-tRNA-ligase_1_N"/>
</dbReference>
<dbReference type="InterPro" id="IPR002312">
    <property type="entry name" value="Asp/Asn-tRNA-synth_IIb"/>
</dbReference>
<dbReference type="InterPro" id="IPR047090">
    <property type="entry name" value="AspRS_core"/>
</dbReference>
<dbReference type="InterPro" id="IPR004115">
    <property type="entry name" value="GAD-like_sf"/>
</dbReference>
<dbReference type="InterPro" id="IPR029351">
    <property type="entry name" value="GAD_dom"/>
</dbReference>
<dbReference type="InterPro" id="IPR012340">
    <property type="entry name" value="NA-bd_OB-fold"/>
</dbReference>
<dbReference type="InterPro" id="IPR004365">
    <property type="entry name" value="NA-bd_OB_tRNA"/>
</dbReference>
<dbReference type="NCBIfam" id="TIGR00459">
    <property type="entry name" value="aspS_bact"/>
    <property type="match status" value="1"/>
</dbReference>
<dbReference type="NCBIfam" id="NF001750">
    <property type="entry name" value="PRK00476.1"/>
    <property type="match status" value="1"/>
</dbReference>
<dbReference type="PANTHER" id="PTHR22594:SF5">
    <property type="entry name" value="ASPARTATE--TRNA LIGASE, MITOCHONDRIAL"/>
    <property type="match status" value="1"/>
</dbReference>
<dbReference type="PANTHER" id="PTHR22594">
    <property type="entry name" value="ASPARTYL/LYSYL-TRNA SYNTHETASE"/>
    <property type="match status" value="1"/>
</dbReference>
<dbReference type="Pfam" id="PF02938">
    <property type="entry name" value="GAD"/>
    <property type="match status" value="1"/>
</dbReference>
<dbReference type="Pfam" id="PF00152">
    <property type="entry name" value="tRNA-synt_2"/>
    <property type="match status" value="1"/>
</dbReference>
<dbReference type="Pfam" id="PF01336">
    <property type="entry name" value="tRNA_anti-codon"/>
    <property type="match status" value="1"/>
</dbReference>
<dbReference type="PRINTS" id="PR01042">
    <property type="entry name" value="TRNASYNTHASP"/>
</dbReference>
<dbReference type="SUPFAM" id="SSF55681">
    <property type="entry name" value="Class II aaRS and biotin synthetases"/>
    <property type="match status" value="1"/>
</dbReference>
<dbReference type="SUPFAM" id="SSF55261">
    <property type="entry name" value="GAD domain-like"/>
    <property type="match status" value="1"/>
</dbReference>
<dbReference type="SUPFAM" id="SSF50249">
    <property type="entry name" value="Nucleic acid-binding proteins"/>
    <property type="match status" value="1"/>
</dbReference>
<dbReference type="PROSITE" id="PS50862">
    <property type="entry name" value="AA_TRNA_LIGASE_II"/>
    <property type="match status" value="1"/>
</dbReference>
<gene>
    <name evidence="1" type="primary">aspS</name>
    <name type="ordered locus">HSM_0857</name>
</gene>
<reference key="1">
    <citation type="submission" date="2008-02" db="EMBL/GenBank/DDBJ databases">
        <title>Complete sequence of Haemophilus somnus 2336.</title>
        <authorList>
            <consortium name="US DOE Joint Genome Institute"/>
            <person name="Siddaramappa S."/>
            <person name="Duncan A.J."/>
            <person name="Challacombe J.F."/>
            <person name="Rainey D."/>
            <person name="Gillaspy A.F."/>
            <person name="Carson M."/>
            <person name="Gipson J."/>
            <person name="Gipson M."/>
            <person name="Bruce D."/>
            <person name="Detter J.C."/>
            <person name="Han C.S."/>
            <person name="Land M."/>
            <person name="Tapia R."/>
            <person name="Thompson L.S."/>
            <person name="Orvis J."/>
            <person name="Zaitshik J."/>
            <person name="Barnes G."/>
            <person name="Brettin T.S."/>
            <person name="Dyer D.W."/>
            <person name="Inzana T.J."/>
        </authorList>
    </citation>
    <scope>NUCLEOTIDE SEQUENCE [LARGE SCALE GENOMIC DNA]</scope>
    <source>
        <strain>2336</strain>
    </source>
</reference>
<comment type="function">
    <text evidence="1">Catalyzes the attachment of L-aspartate to tRNA(Asp) in a two-step reaction: L-aspartate is first activated by ATP to form Asp-AMP and then transferred to the acceptor end of tRNA(Asp).</text>
</comment>
<comment type="catalytic activity">
    <reaction evidence="1">
        <text>tRNA(Asp) + L-aspartate + ATP = L-aspartyl-tRNA(Asp) + AMP + diphosphate</text>
        <dbReference type="Rhea" id="RHEA:19649"/>
        <dbReference type="Rhea" id="RHEA-COMP:9660"/>
        <dbReference type="Rhea" id="RHEA-COMP:9678"/>
        <dbReference type="ChEBI" id="CHEBI:29991"/>
        <dbReference type="ChEBI" id="CHEBI:30616"/>
        <dbReference type="ChEBI" id="CHEBI:33019"/>
        <dbReference type="ChEBI" id="CHEBI:78442"/>
        <dbReference type="ChEBI" id="CHEBI:78516"/>
        <dbReference type="ChEBI" id="CHEBI:456215"/>
        <dbReference type="EC" id="6.1.1.12"/>
    </reaction>
</comment>
<comment type="subunit">
    <text evidence="1">Homodimer.</text>
</comment>
<comment type="subcellular location">
    <subcellularLocation>
        <location evidence="1">Cytoplasm</location>
    </subcellularLocation>
</comment>
<comment type="similarity">
    <text evidence="1">Belongs to the class-II aminoacyl-tRNA synthetase family. Type 1 subfamily.</text>
</comment>